<accession>Q8PV49</accession>
<proteinExistence type="inferred from homology"/>
<gene>
    <name evidence="1" type="primary">rpl4</name>
    <name type="ordered locus">MM_2125</name>
</gene>
<dbReference type="EMBL" id="AE008384">
    <property type="protein sequence ID" value="AAM31821.1"/>
    <property type="molecule type" value="Genomic_DNA"/>
</dbReference>
<dbReference type="SMR" id="Q8PV49"/>
<dbReference type="KEGG" id="mma:MM_2125"/>
<dbReference type="PATRIC" id="fig|192952.21.peg.2439"/>
<dbReference type="eggNOG" id="arCOG04071">
    <property type="taxonomic scope" value="Archaea"/>
</dbReference>
<dbReference type="HOGENOM" id="CLU_026535_0_0_2"/>
<dbReference type="Proteomes" id="UP000000595">
    <property type="component" value="Chromosome"/>
</dbReference>
<dbReference type="GO" id="GO:1990904">
    <property type="term" value="C:ribonucleoprotein complex"/>
    <property type="evidence" value="ECO:0007669"/>
    <property type="project" value="UniProtKB-KW"/>
</dbReference>
<dbReference type="GO" id="GO:0005840">
    <property type="term" value="C:ribosome"/>
    <property type="evidence" value="ECO:0007669"/>
    <property type="project" value="UniProtKB-KW"/>
</dbReference>
<dbReference type="GO" id="GO:0019843">
    <property type="term" value="F:rRNA binding"/>
    <property type="evidence" value="ECO:0007669"/>
    <property type="project" value="UniProtKB-UniRule"/>
</dbReference>
<dbReference type="GO" id="GO:0003735">
    <property type="term" value="F:structural constituent of ribosome"/>
    <property type="evidence" value="ECO:0007669"/>
    <property type="project" value="InterPro"/>
</dbReference>
<dbReference type="GO" id="GO:0006412">
    <property type="term" value="P:translation"/>
    <property type="evidence" value="ECO:0007669"/>
    <property type="project" value="UniProtKB-UniRule"/>
</dbReference>
<dbReference type="FunFam" id="3.40.1370.10:FF:000011">
    <property type="entry name" value="50S ribosomal protein L4"/>
    <property type="match status" value="1"/>
</dbReference>
<dbReference type="Gene3D" id="3.40.1370.10">
    <property type="match status" value="1"/>
</dbReference>
<dbReference type="HAMAP" id="MF_01328_A">
    <property type="entry name" value="Ribosomal_uL4_A"/>
    <property type="match status" value="1"/>
</dbReference>
<dbReference type="InterPro" id="IPR002136">
    <property type="entry name" value="Ribosomal_uL4"/>
</dbReference>
<dbReference type="InterPro" id="IPR023574">
    <property type="entry name" value="Ribosomal_uL4_dom_sf"/>
</dbReference>
<dbReference type="InterPro" id="IPR013000">
    <property type="entry name" value="Ribosomal_uL4_euk/arc_CS"/>
</dbReference>
<dbReference type="InterPro" id="IPR045240">
    <property type="entry name" value="Ribosomal_uL4_euk/arch"/>
</dbReference>
<dbReference type="InterPro" id="IPR019970">
    <property type="entry name" value="Ribosomall_uL4-arc"/>
</dbReference>
<dbReference type="NCBIfam" id="TIGR03672">
    <property type="entry name" value="rpl4p_arch"/>
    <property type="match status" value="1"/>
</dbReference>
<dbReference type="PANTHER" id="PTHR19431">
    <property type="entry name" value="60S RIBOSOMAL PROTEIN L4"/>
    <property type="match status" value="1"/>
</dbReference>
<dbReference type="Pfam" id="PF00573">
    <property type="entry name" value="Ribosomal_L4"/>
    <property type="match status" value="1"/>
</dbReference>
<dbReference type="SUPFAM" id="SSF52166">
    <property type="entry name" value="Ribosomal protein L4"/>
    <property type="match status" value="1"/>
</dbReference>
<dbReference type="PROSITE" id="PS00939">
    <property type="entry name" value="RIBOSOMAL_L1E"/>
    <property type="match status" value="1"/>
</dbReference>
<evidence type="ECO:0000255" key="1">
    <source>
        <dbReference type="HAMAP-Rule" id="MF_01328"/>
    </source>
</evidence>
<evidence type="ECO:0000256" key="2">
    <source>
        <dbReference type="SAM" id="MobiDB-lite"/>
    </source>
</evidence>
<evidence type="ECO:0000305" key="3"/>
<feature type="chain" id="PRO_0000129334" description="Large ribosomal subunit protein uL4">
    <location>
        <begin position="1"/>
        <end position="253"/>
    </location>
</feature>
<feature type="region of interest" description="Disordered" evidence="2">
    <location>
        <begin position="62"/>
        <end position="107"/>
    </location>
</feature>
<feature type="compositionally biased region" description="Basic residues" evidence="2">
    <location>
        <begin position="82"/>
        <end position="94"/>
    </location>
</feature>
<feature type="compositionally biased region" description="Basic and acidic residues" evidence="2">
    <location>
        <begin position="95"/>
        <end position="107"/>
    </location>
</feature>
<sequence>MATAKTIDLTGRTVGEIELPAVFDADYRPDLIKKAVLAAQANRLQPYGPSLYAGMKTSATGWGSGRGVSHVPRLKNSSRAARVPHAKGGRRAHPPKPEADRSEKVNTKERRYAIRSAIAATIDPTLVNLRGHIFEAELPIVAVNDLENLERTKQVIEFLEAAGLYEDVLRAKYGRHIRAGRGKLRGRKYKHKKSVLIVAGENSPILKAARNLSGVDVVTVDSLNAELLAPGTHAGRLTVWTESAIGKLEGAFQ</sequence>
<keyword id="KW-0687">Ribonucleoprotein</keyword>
<keyword id="KW-0689">Ribosomal protein</keyword>
<keyword id="KW-0694">RNA-binding</keyword>
<keyword id="KW-0699">rRNA-binding</keyword>
<reference key="1">
    <citation type="journal article" date="2002" name="J. Mol. Microbiol. Biotechnol.">
        <title>The genome of Methanosarcina mazei: evidence for lateral gene transfer between Bacteria and Archaea.</title>
        <authorList>
            <person name="Deppenmeier U."/>
            <person name="Johann A."/>
            <person name="Hartsch T."/>
            <person name="Merkl R."/>
            <person name="Schmitz R.A."/>
            <person name="Martinez-Arias R."/>
            <person name="Henne A."/>
            <person name="Wiezer A."/>
            <person name="Baeumer S."/>
            <person name="Jacobi C."/>
            <person name="Brueggemann H."/>
            <person name="Lienard T."/>
            <person name="Christmann A."/>
            <person name="Boemecke M."/>
            <person name="Steckel S."/>
            <person name="Bhattacharyya A."/>
            <person name="Lykidis A."/>
            <person name="Overbeek R."/>
            <person name="Klenk H.-P."/>
            <person name="Gunsalus R.P."/>
            <person name="Fritz H.-J."/>
            <person name="Gottschalk G."/>
        </authorList>
    </citation>
    <scope>NUCLEOTIDE SEQUENCE [LARGE SCALE GENOMIC DNA]</scope>
    <source>
        <strain>ATCC BAA-159 / DSM 3647 / Goe1 / Go1 / JCM 11833 / OCM 88</strain>
    </source>
</reference>
<name>RL4_METMA</name>
<organism>
    <name type="scientific">Methanosarcina mazei (strain ATCC BAA-159 / DSM 3647 / Goe1 / Go1 / JCM 11833 / OCM 88)</name>
    <name type="common">Methanosarcina frisia</name>
    <dbReference type="NCBI Taxonomy" id="192952"/>
    <lineage>
        <taxon>Archaea</taxon>
        <taxon>Methanobacteriati</taxon>
        <taxon>Methanobacteriota</taxon>
        <taxon>Stenosarchaea group</taxon>
        <taxon>Methanomicrobia</taxon>
        <taxon>Methanosarcinales</taxon>
        <taxon>Methanosarcinaceae</taxon>
        <taxon>Methanosarcina</taxon>
    </lineage>
</organism>
<comment type="function">
    <text evidence="1">One of the primary rRNA binding proteins, this protein initially binds near the 5'-end of the 23S rRNA. It is important during the early stages of 50S assembly. It makes multiple contacts with different domains of the 23S rRNA in the assembled 50S subunit and ribosome.</text>
</comment>
<comment type="function">
    <text evidence="1">Forms part of the polypeptide exit tunnel.</text>
</comment>
<comment type="subunit">
    <text evidence="1">Part of the 50S ribosomal subunit.</text>
</comment>
<comment type="similarity">
    <text evidence="1">Belongs to the universal ribosomal protein uL4 family.</text>
</comment>
<protein>
    <recommendedName>
        <fullName evidence="1">Large ribosomal subunit protein uL4</fullName>
    </recommendedName>
    <alternativeName>
        <fullName evidence="3">50S ribosomal protein L4</fullName>
    </alternativeName>
</protein>